<dbReference type="EMBL" id="KZ559173">
    <property type="protein sequence ID" value="PLB34719.1"/>
    <property type="molecule type" value="Genomic_DNA"/>
</dbReference>
<dbReference type="SMR" id="A0A2I2F271"/>
<dbReference type="STRING" id="41067.A0A2I2F271"/>
<dbReference type="OrthoDB" id="446368at2759"/>
<dbReference type="Proteomes" id="UP000234585">
    <property type="component" value="Unassembled WGS sequence"/>
</dbReference>
<dbReference type="GO" id="GO:0005886">
    <property type="term" value="C:plasma membrane"/>
    <property type="evidence" value="ECO:0007669"/>
    <property type="project" value="TreeGrafter"/>
</dbReference>
<dbReference type="GO" id="GO:0022857">
    <property type="term" value="F:transmembrane transporter activity"/>
    <property type="evidence" value="ECO:0007669"/>
    <property type="project" value="InterPro"/>
</dbReference>
<dbReference type="CDD" id="cd17323">
    <property type="entry name" value="MFS_Tpo1_MDR_like"/>
    <property type="match status" value="1"/>
</dbReference>
<dbReference type="FunFam" id="1.20.1250.20:FF:000011">
    <property type="entry name" value="MFS multidrug transporter, putative"/>
    <property type="match status" value="1"/>
</dbReference>
<dbReference type="Gene3D" id="1.20.1250.20">
    <property type="entry name" value="MFS general substrate transporter like domains"/>
    <property type="match status" value="1"/>
</dbReference>
<dbReference type="InterPro" id="IPR011701">
    <property type="entry name" value="MFS"/>
</dbReference>
<dbReference type="InterPro" id="IPR020846">
    <property type="entry name" value="MFS_dom"/>
</dbReference>
<dbReference type="InterPro" id="IPR036259">
    <property type="entry name" value="MFS_trans_sf"/>
</dbReference>
<dbReference type="PANTHER" id="PTHR23502">
    <property type="entry name" value="MAJOR FACILITATOR SUPERFAMILY"/>
    <property type="match status" value="1"/>
</dbReference>
<dbReference type="PANTHER" id="PTHR23502:SF47">
    <property type="entry name" value="MAJOR FACILITATOR SUPERFAMILY (MFS) PROFILE DOMAIN-CONTAINING PROTEIN-RELATED"/>
    <property type="match status" value="1"/>
</dbReference>
<dbReference type="Pfam" id="PF07690">
    <property type="entry name" value="MFS_1"/>
    <property type="match status" value="1"/>
</dbReference>
<dbReference type="SUPFAM" id="SSF103473">
    <property type="entry name" value="MFS general substrate transporter"/>
    <property type="match status" value="1"/>
</dbReference>
<dbReference type="PROSITE" id="PS50850">
    <property type="entry name" value="MFS"/>
    <property type="match status" value="1"/>
</dbReference>
<sequence>MSPNAPAVDIGAAPSLDTPEGDTKQPAEDHVEKDSNLVDWDGPDDPEHPQNLTRLRKWGITFSLASMTMWITFSSSVLSVATHPISEEYNVSTKVMPLATTLVIFGFALGPLCWAPLSELYGRRLPTFLGYGVFAIFQVPVAVAPNLQTIMVCRFFVGVFGSSALSVGPGVMADIWDPVDRGIATPFFFAANLLGPILGPIIGGFITESQLGWRWTAWLTLITSIFFGVLALLIVPETYSPVLLQQRASRLRRATQNQSLYSFLDQHRPTLAEFGYKYLARPFMMFLLEPILICFTVYLSLIYGILYLFLEAYPVAFAEERHWTNKGIAGLPFLGILVGMVLGIGIIIYNTRTRFARHLAEQGQVAPEERLVEMMLTSITMPIGLFWFGWAAHTHWMVQTIAGVPLGIGLFVLFMQGMNYLIDVYLTLSNSAIAANTLARSFLGGSFPLFATAMYHNLGVDWASTILGFISVAMVPIPFAFYIFGARIRAMSRYTVKAGNGIGPPIP</sequence>
<gene>
    <name evidence="5" type="primary">acdC</name>
    <name type="ORF">BDW47DRAFT_120077</name>
</gene>
<organism>
    <name type="scientific">Aspergillus candidus</name>
    <dbReference type="NCBI Taxonomy" id="41067"/>
    <lineage>
        <taxon>Eukaryota</taxon>
        <taxon>Fungi</taxon>
        <taxon>Dikarya</taxon>
        <taxon>Ascomycota</taxon>
        <taxon>Pezizomycotina</taxon>
        <taxon>Eurotiomycetes</taxon>
        <taxon>Eurotiomycetidae</taxon>
        <taxon>Eurotiales</taxon>
        <taxon>Aspergillaceae</taxon>
        <taxon>Aspergillus</taxon>
        <taxon>Aspergillus subgen. Circumdati</taxon>
    </lineage>
</organism>
<name>ACDC_ASPCN</name>
<reference key="1">
    <citation type="submission" date="2017-12" db="EMBL/GenBank/DDBJ databases">
        <authorList>
            <consortium name="DOE Joint Genome Institute"/>
            <person name="Haridas S."/>
            <person name="Kjaerbolling I."/>
            <person name="Vesth T.C."/>
            <person name="Frisvad J.C."/>
            <person name="Nybo J.L."/>
            <person name="Theobald S."/>
            <person name="Kuo A."/>
            <person name="Bowyer P."/>
            <person name="Matsuda Y."/>
            <person name="Mondo S."/>
            <person name="Lyhne E.K."/>
            <person name="Kogle M.E."/>
            <person name="Clum A."/>
            <person name="Lipzen A."/>
            <person name="Salamov A."/>
            <person name="Ngan C.Y."/>
            <person name="Daum C."/>
            <person name="Chiniquy J."/>
            <person name="Barry K."/>
            <person name="LaButti K."/>
            <person name="Simmons B.A."/>
            <person name="Magnuson J.K."/>
            <person name="Mortensen U.H."/>
            <person name="Larsen T.O."/>
            <person name="Grigoriev I.V."/>
            <person name="Baker S.E."/>
            <person name="Andersen M.R."/>
            <person name="Nordberg H.P."/>
            <person name="Cantor M.N."/>
            <person name="Hua S.X."/>
        </authorList>
    </citation>
    <scope>NUCLEOTIDE SEQUENCE [LARGE SCALE GENOMIC DNA]</scope>
    <source>
        <strain>CBS 102.13</strain>
    </source>
</reference>
<reference key="2">
    <citation type="journal article" date="2022" name="Org. Lett.">
        <title>Aspcandine: A Pyrrolobenzazepine Alkaloid Synthesized by a Fungal Nonribosomal Peptide Synthetase-Polyketide Synthase Hybrid.</title>
        <authorList>
            <person name="Chen L."/>
            <person name="Tang J.W."/>
            <person name="Liu Y.Y."/>
            <person name="Matsuda Y."/>
        </authorList>
    </citation>
    <scope>FUNCTION</scope>
</reference>
<feature type="chain" id="PRO_0000456693" description="MFS-type transporter acdC">
    <location>
        <begin position="1"/>
        <end position="507"/>
    </location>
</feature>
<feature type="transmembrane region" description="Helical" evidence="1">
    <location>
        <begin position="58"/>
        <end position="78"/>
    </location>
</feature>
<feature type="transmembrane region" description="Helical" evidence="1">
    <location>
        <begin position="95"/>
        <end position="115"/>
    </location>
</feature>
<feature type="transmembrane region" description="Helical" evidence="1">
    <location>
        <begin position="125"/>
        <end position="145"/>
    </location>
</feature>
<feature type="transmembrane region" description="Helical" evidence="1">
    <location>
        <begin position="155"/>
        <end position="175"/>
    </location>
</feature>
<feature type="transmembrane region" description="Helical" evidence="1">
    <location>
        <begin position="186"/>
        <end position="206"/>
    </location>
</feature>
<feature type="transmembrane region" description="Helical" evidence="1">
    <location>
        <begin position="215"/>
        <end position="235"/>
    </location>
</feature>
<feature type="transmembrane region" description="Helical" evidence="1">
    <location>
        <begin position="290"/>
        <end position="310"/>
    </location>
</feature>
<feature type="transmembrane region" description="Helical" evidence="1">
    <location>
        <begin position="328"/>
        <end position="348"/>
    </location>
</feature>
<feature type="transmembrane region" description="Helical" evidence="1">
    <location>
        <begin position="371"/>
        <end position="391"/>
    </location>
</feature>
<feature type="transmembrane region" description="Helical" evidence="1">
    <location>
        <begin position="395"/>
        <end position="415"/>
    </location>
</feature>
<feature type="transmembrane region" description="Helical" evidence="1">
    <location>
        <begin position="442"/>
        <end position="462"/>
    </location>
</feature>
<feature type="transmembrane region" description="Helical" evidence="1">
    <location>
        <begin position="466"/>
        <end position="486"/>
    </location>
</feature>
<feature type="region of interest" description="Disordered" evidence="3">
    <location>
        <begin position="1"/>
        <end position="50"/>
    </location>
</feature>
<feature type="compositionally biased region" description="Basic and acidic residues" evidence="3">
    <location>
        <begin position="21"/>
        <end position="36"/>
    </location>
</feature>
<feature type="glycosylation site" description="N-linked (GlcNAc...) asparagine" evidence="2">
    <location>
        <position position="51"/>
    </location>
</feature>
<feature type="glycosylation site" description="N-linked (GlcNAc...) asparagine" evidence="2">
    <location>
        <position position="90"/>
    </location>
</feature>
<feature type="glycosylation site" description="N-linked (GlcNAc...) asparagine" evidence="2">
    <location>
        <position position="257"/>
    </location>
</feature>
<proteinExistence type="inferred from homology"/>
<accession>A0A2I2F271</accession>
<protein>
    <recommendedName>
        <fullName evidence="5">MFS-type transporter acdC</fullName>
    </recommendedName>
    <alternativeName>
        <fullName evidence="5">Aspcandine biosynthesis gene cluster protein C</fullName>
    </alternativeName>
</protein>
<comment type="function">
    <text evidence="4">MFS-type transporter; part of the gene cluster that mediates the biosynthesis of aspcandine, a pyrrolobenzazepine alkaloid.</text>
</comment>
<comment type="subcellular location">
    <subcellularLocation>
        <location evidence="1">Membrane</location>
        <topology evidence="1">Multi-pass membrane protein</topology>
    </subcellularLocation>
</comment>
<comment type="similarity">
    <text evidence="6">Belongs to the major facilitator superfamily. CAR1 family.</text>
</comment>
<evidence type="ECO:0000255" key="1"/>
<evidence type="ECO:0000255" key="2">
    <source>
        <dbReference type="PROSITE-ProRule" id="PRU00498"/>
    </source>
</evidence>
<evidence type="ECO:0000256" key="3">
    <source>
        <dbReference type="SAM" id="MobiDB-lite"/>
    </source>
</evidence>
<evidence type="ECO:0000269" key="4">
    <source>
    </source>
</evidence>
<evidence type="ECO:0000303" key="5">
    <source>
    </source>
</evidence>
<evidence type="ECO:0000305" key="6"/>
<keyword id="KW-0325">Glycoprotein</keyword>
<keyword id="KW-0472">Membrane</keyword>
<keyword id="KW-1185">Reference proteome</keyword>
<keyword id="KW-0812">Transmembrane</keyword>
<keyword id="KW-1133">Transmembrane helix</keyword>